<feature type="chain" id="PRO_0000098438" description="Isoleucine--tRNA ligase">
    <location>
        <begin position="1"/>
        <end position="937"/>
    </location>
</feature>
<feature type="short sequence motif" description="'HIGH' region">
    <location>
        <begin position="58"/>
        <end position="68"/>
    </location>
</feature>
<feature type="short sequence motif" description="'KMSKS' region">
    <location>
        <begin position="602"/>
        <end position="606"/>
    </location>
</feature>
<feature type="binding site" evidence="1">
    <location>
        <position position="561"/>
    </location>
    <ligand>
        <name>L-isoleucyl-5'-AMP</name>
        <dbReference type="ChEBI" id="CHEBI:178002"/>
    </ligand>
</feature>
<feature type="binding site" evidence="1">
    <location>
        <position position="605"/>
    </location>
    <ligand>
        <name>ATP</name>
        <dbReference type="ChEBI" id="CHEBI:30616"/>
    </ligand>
</feature>
<feature type="binding site" evidence="1">
    <location>
        <position position="900"/>
    </location>
    <ligand>
        <name>Zn(2+)</name>
        <dbReference type="ChEBI" id="CHEBI:29105"/>
    </ligand>
</feature>
<feature type="binding site" evidence="1">
    <location>
        <position position="903"/>
    </location>
    <ligand>
        <name>Zn(2+)</name>
        <dbReference type="ChEBI" id="CHEBI:29105"/>
    </ligand>
</feature>
<feature type="binding site" evidence="1">
    <location>
        <position position="920"/>
    </location>
    <ligand>
        <name>Zn(2+)</name>
        <dbReference type="ChEBI" id="CHEBI:29105"/>
    </ligand>
</feature>
<feature type="binding site" evidence="1">
    <location>
        <position position="923"/>
    </location>
    <ligand>
        <name>Zn(2+)</name>
        <dbReference type="ChEBI" id="CHEBI:29105"/>
    </ligand>
</feature>
<accession>Q7N8X2</accession>
<proteinExistence type="inferred from homology"/>
<keyword id="KW-0030">Aminoacyl-tRNA synthetase</keyword>
<keyword id="KW-0067">ATP-binding</keyword>
<keyword id="KW-0963">Cytoplasm</keyword>
<keyword id="KW-0436">Ligase</keyword>
<keyword id="KW-0479">Metal-binding</keyword>
<keyword id="KW-0547">Nucleotide-binding</keyword>
<keyword id="KW-0648">Protein biosynthesis</keyword>
<keyword id="KW-1185">Reference proteome</keyword>
<keyword id="KW-0862">Zinc</keyword>
<sequence length="937" mass="104977">MSDYKNTLNLPETGFPMRGDLAKREPNMLKRWYKDELYQVIRKAKAGKKTFILHDGPPYANGSIHIGHSVNKILKDIIIKSKGMAGYDSPYIPGWDCHGLPIELKVEQIIGKPGEKFSAAEFRAECRKYAKEQIEGQKKDFIRLGILGDWERPYLTMDFKTEADIIRALSRIIANGHLLKGAKPVHWCTDCRSSLAEAEVEYYDKTSPSIDVRFNAVDAVAVCEKFGVQAPEQPVSLVIWTTTPWTLPANRAIALHAEFNYQLVQIEGECLILAADLVESVMQRAGITSWTVLGHCAGSALELLRFKHPFMGFDSPVVLGDHVTLDAGTGAVHTAPGHGPDDFVLGQKYGLEVANPVGPNGCYLPGTYPSLDGMFVFKANDVVLNILSENNALLHLEKLQHSYPCCWRHKTPIIFRATPQWFVSMDQNGLRKQSLQEIKGVQWIPGWGQARIEAMVENRPDWCISRQRTWGTPMSLFVHKETEELHPRTIELMEEVAKRVEVDGIQAWWDLEPAELLGDDAANYVKIFDTLDVWFDSGSTHASVVDARPEFQGNAADIYLEGSDQHRGWFMSSLMISTAIKGKAPYRQVLTHGFTVDGQGRKMSKSIGNTISPQDVMDKLGADILRLWVASTDYTGEIAVSDEILKRSADAYRRIRNTARFLLANLNGFDPEQHSVKPEEMAVLDRWAVGCAQAAQADIAKCYDKYDFHTVVQRMMQFCSVEMGSFYLDIIKDRQYTAKSDSLARRSCQTALYHIAEALVRWMAPILSFTADEVWNELPGKRAQYVFTEEWYGGLFGLAAGELMNDAFWADLLAVRGEVNKVLEQARADKHIRSSLEAAVTLYADNELADKLNSLGDELRFVLLTSQVVVADYEQAGEDAQQSEIGSLKIAFRKADGEKCPRCWHYAKDVGLVAEHAELCGRCVTNVAGNGEERKFA</sequence>
<comment type="function">
    <text evidence="1">Catalyzes the attachment of isoleucine to tRNA(Ile). As IleRS can inadvertently accommodate and process structurally similar amino acids such as valine, to avoid such errors it has two additional distinct tRNA(Ile)-dependent editing activities. One activity is designated as 'pretransfer' editing and involves the hydrolysis of activated Val-AMP. The other activity is designated 'posttransfer' editing and involves deacylation of mischarged Val-tRNA(Ile).</text>
</comment>
<comment type="catalytic activity">
    <reaction evidence="1">
        <text>tRNA(Ile) + L-isoleucine + ATP = L-isoleucyl-tRNA(Ile) + AMP + diphosphate</text>
        <dbReference type="Rhea" id="RHEA:11060"/>
        <dbReference type="Rhea" id="RHEA-COMP:9666"/>
        <dbReference type="Rhea" id="RHEA-COMP:9695"/>
        <dbReference type="ChEBI" id="CHEBI:30616"/>
        <dbReference type="ChEBI" id="CHEBI:33019"/>
        <dbReference type="ChEBI" id="CHEBI:58045"/>
        <dbReference type="ChEBI" id="CHEBI:78442"/>
        <dbReference type="ChEBI" id="CHEBI:78528"/>
        <dbReference type="ChEBI" id="CHEBI:456215"/>
        <dbReference type="EC" id="6.1.1.5"/>
    </reaction>
</comment>
<comment type="cofactor">
    <cofactor evidence="1">
        <name>Zn(2+)</name>
        <dbReference type="ChEBI" id="CHEBI:29105"/>
    </cofactor>
    <text evidence="1">Binds 1 zinc ion per subunit.</text>
</comment>
<comment type="subunit">
    <text evidence="1">Monomer.</text>
</comment>
<comment type="subcellular location">
    <subcellularLocation>
        <location evidence="1">Cytoplasm</location>
    </subcellularLocation>
</comment>
<comment type="domain">
    <text evidence="1">IleRS has two distinct active sites: one for aminoacylation and one for editing. The misactivated valine is translocated from the active site to the editing site, which sterically excludes the correctly activated isoleucine. The single editing site contains two valyl binding pockets, one specific for each substrate (Val-AMP or Val-tRNA(Ile)).</text>
</comment>
<comment type="similarity">
    <text evidence="1">Belongs to the class-I aminoacyl-tRNA synthetase family. IleS type 1 subfamily.</text>
</comment>
<protein>
    <recommendedName>
        <fullName evidence="1">Isoleucine--tRNA ligase</fullName>
        <ecNumber evidence="1">6.1.1.5</ecNumber>
    </recommendedName>
    <alternativeName>
        <fullName evidence="1">Isoleucyl-tRNA synthetase</fullName>
        <shortName evidence="1">IleRS</shortName>
    </alternativeName>
</protein>
<evidence type="ECO:0000255" key="1">
    <source>
        <dbReference type="HAMAP-Rule" id="MF_02002"/>
    </source>
</evidence>
<dbReference type="EC" id="6.1.1.5" evidence="1"/>
<dbReference type="EMBL" id="BX571860">
    <property type="protein sequence ID" value="CAE12886.1"/>
    <property type="molecule type" value="Genomic_DNA"/>
</dbReference>
<dbReference type="RefSeq" id="WP_011144970.1">
    <property type="nucleotide sequence ID" value="NC_005126.1"/>
</dbReference>
<dbReference type="SMR" id="Q7N8X2"/>
<dbReference type="STRING" id="243265.plu0591"/>
<dbReference type="GeneID" id="48846878"/>
<dbReference type="KEGG" id="plu:plu0591"/>
<dbReference type="eggNOG" id="COG0060">
    <property type="taxonomic scope" value="Bacteria"/>
</dbReference>
<dbReference type="HOGENOM" id="CLU_001493_7_1_6"/>
<dbReference type="OrthoDB" id="9810365at2"/>
<dbReference type="Proteomes" id="UP000002514">
    <property type="component" value="Chromosome"/>
</dbReference>
<dbReference type="GO" id="GO:0005829">
    <property type="term" value="C:cytosol"/>
    <property type="evidence" value="ECO:0007669"/>
    <property type="project" value="TreeGrafter"/>
</dbReference>
<dbReference type="GO" id="GO:0002161">
    <property type="term" value="F:aminoacyl-tRNA deacylase activity"/>
    <property type="evidence" value="ECO:0007669"/>
    <property type="project" value="InterPro"/>
</dbReference>
<dbReference type="GO" id="GO:0005524">
    <property type="term" value="F:ATP binding"/>
    <property type="evidence" value="ECO:0007669"/>
    <property type="project" value="UniProtKB-UniRule"/>
</dbReference>
<dbReference type="GO" id="GO:0004822">
    <property type="term" value="F:isoleucine-tRNA ligase activity"/>
    <property type="evidence" value="ECO:0007669"/>
    <property type="project" value="UniProtKB-UniRule"/>
</dbReference>
<dbReference type="GO" id="GO:0000049">
    <property type="term" value="F:tRNA binding"/>
    <property type="evidence" value="ECO:0007669"/>
    <property type="project" value="InterPro"/>
</dbReference>
<dbReference type="GO" id="GO:0008270">
    <property type="term" value="F:zinc ion binding"/>
    <property type="evidence" value="ECO:0007669"/>
    <property type="project" value="UniProtKB-UniRule"/>
</dbReference>
<dbReference type="GO" id="GO:0006428">
    <property type="term" value="P:isoleucyl-tRNA aminoacylation"/>
    <property type="evidence" value="ECO:0007669"/>
    <property type="project" value="UniProtKB-UniRule"/>
</dbReference>
<dbReference type="CDD" id="cd07960">
    <property type="entry name" value="Anticodon_Ia_Ile_BEm"/>
    <property type="match status" value="1"/>
</dbReference>
<dbReference type="CDD" id="cd00818">
    <property type="entry name" value="IleRS_core"/>
    <property type="match status" value="1"/>
</dbReference>
<dbReference type="FunFam" id="1.10.730.20:FF:000001">
    <property type="entry name" value="Isoleucine--tRNA ligase"/>
    <property type="match status" value="1"/>
</dbReference>
<dbReference type="FunFam" id="3.40.50.620:FF:000042">
    <property type="entry name" value="Isoleucine--tRNA ligase"/>
    <property type="match status" value="1"/>
</dbReference>
<dbReference type="FunFam" id="3.40.50.620:FF:000048">
    <property type="entry name" value="Isoleucine--tRNA ligase"/>
    <property type="match status" value="1"/>
</dbReference>
<dbReference type="FunFam" id="3.90.740.10:FF:000002">
    <property type="entry name" value="Isoleucine--tRNA ligase"/>
    <property type="match status" value="1"/>
</dbReference>
<dbReference type="Gene3D" id="1.10.730.20">
    <property type="match status" value="1"/>
</dbReference>
<dbReference type="Gene3D" id="3.40.50.620">
    <property type="entry name" value="HUPs"/>
    <property type="match status" value="2"/>
</dbReference>
<dbReference type="Gene3D" id="3.90.740.10">
    <property type="entry name" value="Valyl/Leucyl/Isoleucyl-tRNA synthetase, editing domain"/>
    <property type="match status" value="1"/>
</dbReference>
<dbReference type="HAMAP" id="MF_02002">
    <property type="entry name" value="Ile_tRNA_synth_type1"/>
    <property type="match status" value="1"/>
</dbReference>
<dbReference type="InterPro" id="IPR001412">
    <property type="entry name" value="aa-tRNA-synth_I_CS"/>
</dbReference>
<dbReference type="InterPro" id="IPR002300">
    <property type="entry name" value="aa-tRNA-synth_Ia"/>
</dbReference>
<dbReference type="InterPro" id="IPR033708">
    <property type="entry name" value="Anticodon_Ile_BEm"/>
</dbReference>
<dbReference type="InterPro" id="IPR002301">
    <property type="entry name" value="Ile-tRNA-ligase"/>
</dbReference>
<dbReference type="InterPro" id="IPR023585">
    <property type="entry name" value="Ile-tRNA-ligase_type1"/>
</dbReference>
<dbReference type="InterPro" id="IPR050081">
    <property type="entry name" value="Ile-tRNA_ligase"/>
</dbReference>
<dbReference type="InterPro" id="IPR013155">
    <property type="entry name" value="M/V/L/I-tRNA-synth_anticd-bd"/>
</dbReference>
<dbReference type="InterPro" id="IPR014729">
    <property type="entry name" value="Rossmann-like_a/b/a_fold"/>
</dbReference>
<dbReference type="InterPro" id="IPR009080">
    <property type="entry name" value="tRNAsynth_Ia_anticodon-bd"/>
</dbReference>
<dbReference type="InterPro" id="IPR009008">
    <property type="entry name" value="Val/Leu/Ile-tRNA-synth_edit"/>
</dbReference>
<dbReference type="InterPro" id="IPR010663">
    <property type="entry name" value="Znf_FPG/IleRS"/>
</dbReference>
<dbReference type="NCBIfam" id="TIGR00392">
    <property type="entry name" value="ileS"/>
    <property type="match status" value="1"/>
</dbReference>
<dbReference type="PANTHER" id="PTHR42765:SF1">
    <property type="entry name" value="ISOLEUCINE--TRNA LIGASE, MITOCHONDRIAL"/>
    <property type="match status" value="1"/>
</dbReference>
<dbReference type="PANTHER" id="PTHR42765">
    <property type="entry name" value="SOLEUCYL-TRNA SYNTHETASE"/>
    <property type="match status" value="1"/>
</dbReference>
<dbReference type="Pfam" id="PF08264">
    <property type="entry name" value="Anticodon_1"/>
    <property type="match status" value="1"/>
</dbReference>
<dbReference type="Pfam" id="PF00133">
    <property type="entry name" value="tRNA-synt_1"/>
    <property type="match status" value="1"/>
</dbReference>
<dbReference type="Pfam" id="PF06827">
    <property type="entry name" value="zf-FPG_IleRS"/>
    <property type="match status" value="1"/>
</dbReference>
<dbReference type="PRINTS" id="PR00984">
    <property type="entry name" value="TRNASYNTHILE"/>
</dbReference>
<dbReference type="SUPFAM" id="SSF47323">
    <property type="entry name" value="Anticodon-binding domain of a subclass of class I aminoacyl-tRNA synthetases"/>
    <property type="match status" value="1"/>
</dbReference>
<dbReference type="SUPFAM" id="SSF52374">
    <property type="entry name" value="Nucleotidylyl transferase"/>
    <property type="match status" value="1"/>
</dbReference>
<dbReference type="SUPFAM" id="SSF50677">
    <property type="entry name" value="ValRS/IleRS/LeuRS editing domain"/>
    <property type="match status" value="1"/>
</dbReference>
<dbReference type="PROSITE" id="PS00178">
    <property type="entry name" value="AA_TRNA_LIGASE_I"/>
    <property type="match status" value="1"/>
</dbReference>
<organism>
    <name type="scientific">Photorhabdus laumondii subsp. laumondii (strain DSM 15139 / CIP 105565 / TT01)</name>
    <name type="common">Photorhabdus luminescens subsp. laumondii</name>
    <dbReference type="NCBI Taxonomy" id="243265"/>
    <lineage>
        <taxon>Bacteria</taxon>
        <taxon>Pseudomonadati</taxon>
        <taxon>Pseudomonadota</taxon>
        <taxon>Gammaproteobacteria</taxon>
        <taxon>Enterobacterales</taxon>
        <taxon>Morganellaceae</taxon>
        <taxon>Photorhabdus</taxon>
    </lineage>
</organism>
<reference key="1">
    <citation type="journal article" date="2003" name="Nat. Biotechnol.">
        <title>The genome sequence of the entomopathogenic bacterium Photorhabdus luminescens.</title>
        <authorList>
            <person name="Duchaud E."/>
            <person name="Rusniok C."/>
            <person name="Frangeul L."/>
            <person name="Buchrieser C."/>
            <person name="Givaudan A."/>
            <person name="Taourit S."/>
            <person name="Bocs S."/>
            <person name="Boursaux-Eude C."/>
            <person name="Chandler M."/>
            <person name="Charles J.-F."/>
            <person name="Dassa E."/>
            <person name="Derose R."/>
            <person name="Derzelle S."/>
            <person name="Freyssinet G."/>
            <person name="Gaudriault S."/>
            <person name="Medigue C."/>
            <person name="Lanois A."/>
            <person name="Powell K."/>
            <person name="Siguier P."/>
            <person name="Vincent R."/>
            <person name="Wingate V."/>
            <person name="Zouine M."/>
            <person name="Glaser P."/>
            <person name="Boemare N."/>
            <person name="Danchin A."/>
            <person name="Kunst F."/>
        </authorList>
    </citation>
    <scope>NUCLEOTIDE SEQUENCE [LARGE SCALE GENOMIC DNA]</scope>
    <source>
        <strain>DSM 15139 / CIP 105565 / TT01</strain>
    </source>
</reference>
<gene>
    <name evidence="1" type="primary">ileS</name>
    <name type="ordered locus">plu0591</name>
</gene>
<name>SYI_PHOLL</name>